<protein>
    <recommendedName>
        <fullName>Potassium transporter 13</fullName>
        <shortName>AtKT5</shortName>
        <shortName>AtPOT13</shortName>
    </recommendedName>
</protein>
<accession>Q8LPL8</accession>
<accession>O22401</accession>
<accession>Q9M072</accession>
<accession>Q9SU96</accession>
<keyword id="KW-1003">Cell membrane</keyword>
<keyword id="KW-0325">Glycoprotein</keyword>
<keyword id="KW-0406">Ion transport</keyword>
<keyword id="KW-0472">Membrane</keyword>
<keyword id="KW-0597">Phosphoprotein</keyword>
<keyword id="KW-0630">Potassium</keyword>
<keyword id="KW-0633">Potassium transport</keyword>
<keyword id="KW-1185">Reference proteome</keyword>
<keyword id="KW-0812">Transmembrane</keyword>
<keyword id="KW-1133">Transmembrane helix</keyword>
<keyword id="KW-0813">Transport</keyword>
<gene>
    <name type="primary">POT13</name>
    <name type="synonym">KT5</name>
    <name type="synonym">KUP5</name>
    <name type="ordered locus">At4g33530</name>
    <name type="ORF">F17M5.1</name>
    <name type="ORF">T16L1.20</name>
</gene>
<reference key="1">
    <citation type="journal article" date="1999" name="Nature">
        <title>Sequence and analysis of chromosome 4 of the plant Arabidopsis thaliana.</title>
        <authorList>
            <person name="Mayer K.F.X."/>
            <person name="Schueller C."/>
            <person name="Wambutt R."/>
            <person name="Murphy G."/>
            <person name="Volckaert G."/>
            <person name="Pohl T."/>
            <person name="Duesterhoeft A."/>
            <person name="Stiekema W."/>
            <person name="Entian K.-D."/>
            <person name="Terryn N."/>
            <person name="Harris B."/>
            <person name="Ansorge W."/>
            <person name="Brandt P."/>
            <person name="Grivell L.A."/>
            <person name="Rieger M."/>
            <person name="Weichselgartner M."/>
            <person name="de Simone V."/>
            <person name="Obermaier B."/>
            <person name="Mache R."/>
            <person name="Mueller M."/>
            <person name="Kreis M."/>
            <person name="Delseny M."/>
            <person name="Puigdomenech P."/>
            <person name="Watson M."/>
            <person name="Schmidtheini T."/>
            <person name="Reichert B."/>
            <person name="Portetelle D."/>
            <person name="Perez-Alonso M."/>
            <person name="Boutry M."/>
            <person name="Bancroft I."/>
            <person name="Vos P."/>
            <person name="Hoheisel J."/>
            <person name="Zimmermann W."/>
            <person name="Wedler H."/>
            <person name="Ridley P."/>
            <person name="Langham S.-A."/>
            <person name="McCullagh B."/>
            <person name="Bilham L."/>
            <person name="Robben J."/>
            <person name="van der Schueren J."/>
            <person name="Grymonprez B."/>
            <person name="Chuang Y.-J."/>
            <person name="Vandenbussche F."/>
            <person name="Braeken M."/>
            <person name="Weltjens I."/>
            <person name="Voet M."/>
            <person name="Bastiaens I."/>
            <person name="Aert R."/>
            <person name="Defoor E."/>
            <person name="Weitzenegger T."/>
            <person name="Bothe G."/>
            <person name="Ramsperger U."/>
            <person name="Hilbert H."/>
            <person name="Braun M."/>
            <person name="Holzer E."/>
            <person name="Brandt A."/>
            <person name="Peters S."/>
            <person name="van Staveren M."/>
            <person name="Dirkse W."/>
            <person name="Mooijman P."/>
            <person name="Klein Lankhorst R."/>
            <person name="Rose M."/>
            <person name="Hauf J."/>
            <person name="Koetter P."/>
            <person name="Berneiser S."/>
            <person name="Hempel S."/>
            <person name="Feldpausch M."/>
            <person name="Lamberth S."/>
            <person name="Van den Daele H."/>
            <person name="De Keyser A."/>
            <person name="Buysshaert C."/>
            <person name="Gielen J."/>
            <person name="Villarroel R."/>
            <person name="De Clercq R."/>
            <person name="van Montagu M."/>
            <person name="Rogers J."/>
            <person name="Cronin A."/>
            <person name="Quail M.A."/>
            <person name="Bray-Allen S."/>
            <person name="Clark L."/>
            <person name="Doggett J."/>
            <person name="Hall S."/>
            <person name="Kay M."/>
            <person name="Lennard N."/>
            <person name="McLay K."/>
            <person name="Mayes R."/>
            <person name="Pettett A."/>
            <person name="Rajandream M.A."/>
            <person name="Lyne M."/>
            <person name="Benes V."/>
            <person name="Rechmann S."/>
            <person name="Borkova D."/>
            <person name="Bloecker H."/>
            <person name="Scharfe M."/>
            <person name="Grimm M."/>
            <person name="Loehnert T.-H."/>
            <person name="Dose S."/>
            <person name="de Haan M."/>
            <person name="Maarse A.C."/>
            <person name="Schaefer M."/>
            <person name="Mueller-Auer S."/>
            <person name="Gabel C."/>
            <person name="Fuchs M."/>
            <person name="Fartmann B."/>
            <person name="Granderath K."/>
            <person name="Dauner D."/>
            <person name="Herzl A."/>
            <person name="Neumann S."/>
            <person name="Argiriou A."/>
            <person name="Vitale D."/>
            <person name="Liguori R."/>
            <person name="Piravandi E."/>
            <person name="Massenet O."/>
            <person name="Quigley F."/>
            <person name="Clabauld G."/>
            <person name="Muendlein A."/>
            <person name="Felber R."/>
            <person name="Schnabl S."/>
            <person name="Hiller R."/>
            <person name="Schmidt W."/>
            <person name="Lecharny A."/>
            <person name="Aubourg S."/>
            <person name="Chefdor F."/>
            <person name="Cooke R."/>
            <person name="Berger C."/>
            <person name="Monfort A."/>
            <person name="Casacuberta E."/>
            <person name="Gibbons T."/>
            <person name="Weber N."/>
            <person name="Vandenbol M."/>
            <person name="Bargues M."/>
            <person name="Terol J."/>
            <person name="Torres A."/>
            <person name="Perez-Perez A."/>
            <person name="Purnelle B."/>
            <person name="Bent E."/>
            <person name="Johnson S."/>
            <person name="Tacon D."/>
            <person name="Jesse T."/>
            <person name="Heijnen L."/>
            <person name="Schwarz S."/>
            <person name="Scholler P."/>
            <person name="Heber S."/>
            <person name="Francs P."/>
            <person name="Bielke C."/>
            <person name="Frishman D."/>
            <person name="Haase D."/>
            <person name="Lemcke K."/>
            <person name="Mewes H.-W."/>
            <person name="Stocker S."/>
            <person name="Zaccaria P."/>
            <person name="Bevan M."/>
            <person name="Wilson R.K."/>
            <person name="de la Bastide M."/>
            <person name="Habermann K."/>
            <person name="Parnell L."/>
            <person name="Dedhia N."/>
            <person name="Gnoj L."/>
            <person name="Schutz K."/>
            <person name="Huang E."/>
            <person name="Spiegel L."/>
            <person name="Sekhon M."/>
            <person name="Murray J."/>
            <person name="Sheet P."/>
            <person name="Cordes M."/>
            <person name="Abu-Threideh J."/>
            <person name="Stoneking T."/>
            <person name="Kalicki J."/>
            <person name="Graves T."/>
            <person name="Harmon G."/>
            <person name="Edwards J."/>
            <person name="Latreille P."/>
            <person name="Courtney L."/>
            <person name="Cloud J."/>
            <person name="Abbott A."/>
            <person name="Scott K."/>
            <person name="Johnson D."/>
            <person name="Minx P."/>
            <person name="Bentley D."/>
            <person name="Fulton B."/>
            <person name="Miller N."/>
            <person name="Greco T."/>
            <person name="Kemp K."/>
            <person name="Kramer J."/>
            <person name="Fulton L."/>
            <person name="Mardis E."/>
            <person name="Dante M."/>
            <person name="Pepin K."/>
            <person name="Hillier L.W."/>
            <person name="Nelson J."/>
            <person name="Spieth J."/>
            <person name="Ryan E."/>
            <person name="Andrews S."/>
            <person name="Geisel C."/>
            <person name="Layman D."/>
            <person name="Du H."/>
            <person name="Ali J."/>
            <person name="Berghoff A."/>
            <person name="Jones K."/>
            <person name="Drone K."/>
            <person name="Cotton M."/>
            <person name="Joshu C."/>
            <person name="Antonoiu B."/>
            <person name="Zidanic M."/>
            <person name="Strong C."/>
            <person name="Sun H."/>
            <person name="Lamar B."/>
            <person name="Yordan C."/>
            <person name="Ma P."/>
            <person name="Zhong J."/>
            <person name="Preston R."/>
            <person name="Vil D."/>
            <person name="Shekher M."/>
            <person name="Matero A."/>
            <person name="Shah R."/>
            <person name="Swaby I.K."/>
            <person name="O'Shaughnessy A."/>
            <person name="Rodriguez M."/>
            <person name="Hoffman J."/>
            <person name="Till S."/>
            <person name="Granat S."/>
            <person name="Shohdy N."/>
            <person name="Hasegawa A."/>
            <person name="Hameed A."/>
            <person name="Lodhi M."/>
            <person name="Johnson A."/>
            <person name="Chen E."/>
            <person name="Marra M.A."/>
            <person name="Martienssen R."/>
            <person name="McCombie W.R."/>
        </authorList>
    </citation>
    <scope>NUCLEOTIDE SEQUENCE [LARGE SCALE GENOMIC DNA]</scope>
    <source>
        <strain>cv. Columbia</strain>
    </source>
</reference>
<reference key="2">
    <citation type="journal article" date="2017" name="Plant J.">
        <title>Araport11: a complete reannotation of the Arabidopsis thaliana reference genome.</title>
        <authorList>
            <person name="Cheng C.Y."/>
            <person name="Krishnakumar V."/>
            <person name="Chan A.P."/>
            <person name="Thibaud-Nissen F."/>
            <person name="Schobel S."/>
            <person name="Town C.D."/>
        </authorList>
    </citation>
    <scope>GENOME REANNOTATION</scope>
    <source>
        <strain>cv. Columbia</strain>
    </source>
</reference>
<reference key="3">
    <citation type="journal article" date="2003" name="Science">
        <title>Empirical analysis of transcriptional activity in the Arabidopsis genome.</title>
        <authorList>
            <person name="Yamada K."/>
            <person name="Lim J."/>
            <person name="Dale J.M."/>
            <person name="Chen H."/>
            <person name="Shinn P."/>
            <person name="Palm C.J."/>
            <person name="Southwick A.M."/>
            <person name="Wu H.C."/>
            <person name="Kim C.J."/>
            <person name="Nguyen M."/>
            <person name="Pham P.K."/>
            <person name="Cheuk R.F."/>
            <person name="Karlin-Newmann G."/>
            <person name="Liu S.X."/>
            <person name="Lam B."/>
            <person name="Sakano H."/>
            <person name="Wu T."/>
            <person name="Yu G."/>
            <person name="Miranda M."/>
            <person name="Quach H.L."/>
            <person name="Tripp M."/>
            <person name="Chang C.H."/>
            <person name="Lee J.M."/>
            <person name="Toriumi M.J."/>
            <person name="Chan M.M."/>
            <person name="Tang C.C."/>
            <person name="Onodera C.S."/>
            <person name="Deng J.M."/>
            <person name="Akiyama K."/>
            <person name="Ansari Y."/>
            <person name="Arakawa T."/>
            <person name="Banh J."/>
            <person name="Banno F."/>
            <person name="Bowser L."/>
            <person name="Brooks S.Y."/>
            <person name="Carninci P."/>
            <person name="Chao Q."/>
            <person name="Choy N."/>
            <person name="Enju A."/>
            <person name="Goldsmith A.D."/>
            <person name="Gurjal M."/>
            <person name="Hansen N.F."/>
            <person name="Hayashizaki Y."/>
            <person name="Johnson-Hopson C."/>
            <person name="Hsuan V.W."/>
            <person name="Iida K."/>
            <person name="Karnes M."/>
            <person name="Khan S."/>
            <person name="Koesema E."/>
            <person name="Ishida J."/>
            <person name="Jiang P.X."/>
            <person name="Jones T."/>
            <person name="Kawai J."/>
            <person name="Kamiya A."/>
            <person name="Meyers C."/>
            <person name="Nakajima M."/>
            <person name="Narusaka M."/>
            <person name="Seki M."/>
            <person name="Sakurai T."/>
            <person name="Satou M."/>
            <person name="Tamse R."/>
            <person name="Vaysberg M."/>
            <person name="Wallender E.K."/>
            <person name="Wong C."/>
            <person name="Yamamura Y."/>
            <person name="Yuan S."/>
            <person name="Shinozaki K."/>
            <person name="Davis R.W."/>
            <person name="Theologis A."/>
            <person name="Ecker J.R."/>
        </authorList>
    </citation>
    <scope>NUCLEOTIDE SEQUENCE [LARGE SCALE MRNA]</scope>
    <source>
        <strain>cv. Columbia</strain>
    </source>
</reference>
<reference key="4">
    <citation type="journal article" date="1997" name="FEBS Lett.">
        <title>A new family of K+ transporters from Arabidopsis that are conserved across phyla.</title>
        <authorList>
            <person name="Quintero F.J."/>
            <person name="Blatt M.R."/>
        </authorList>
    </citation>
    <scope>NUCLEOTIDE SEQUENCE [MRNA] OF 609-736</scope>
    <source>
        <strain>cv. Columbia</strain>
    </source>
</reference>
<reference key="5">
    <citation type="journal article" date="2001" name="Plant Physiol.">
        <title>Phylogenetic relationships within cation transporter families of Arabidopsis.</title>
        <authorList>
            <person name="Maeser P."/>
            <person name="Thomine S."/>
            <person name="Schroeder J.I."/>
            <person name="Ward J.M."/>
            <person name="Hirschi K."/>
            <person name="Sze H."/>
            <person name="Talke I.N."/>
            <person name="Amtmann A."/>
            <person name="Maathuis F.J.M."/>
            <person name="Sanders D."/>
            <person name="Harper J.F."/>
            <person name="Tchieu J."/>
            <person name="Gribskov M."/>
            <person name="Persans M.W."/>
            <person name="Salt D.E."/>
            <person name="Kim S.A."/>
            <person name="Guerinot M.L."/>
        </authorList>
    </citation>
    <scope>GENE FAMILY</scope>
    <scope>NOMENCLATURE</scope>
</reference>
<reference key="6">
    <citation type="journal article" date="2009" name="Plant Physiol.">
        <title>Large-scale Arabidopsis phosphoproteome profiling reveals novel chloroplast kinase substrates and phosphorylation networks.</title>
        <authorList>
            <person name="Reiland S."/>
            <person name="Messerli G."/>
            <person name="Baerenfaller K."/>
            <person name="Gerrits B."/>
            <person name="Endler A."/>
            <person name="Grossmann J."/>
            <person name="Gruissem W."/>
            <person name="Baginsky S."/>
        </authorList>
    </citation>
    <scope>PHOSPHORYLATION [LARGE SCALE ANALYSIS] AT SER-766</scope>
    <scope>IDENTIFICATION BY MASS SPECTROMETRY [LARGE SCALE ANALYSIS]</scope>
</reference>
<name>POT13_ARATH</name>
<sequence length="855" mass="94738">MFHVEEESSGGDGSEIDEEFGGDDSTTSLSRWVFDEKDDYEVNEDYDDDGYDEHNHPEMDSDEEDDNVEQRLIRTSPAVDSFDVDALEIPGTQKNEIEDTGIGKKLILALQTLGVVFGDIGTSPLYTFTVMFRRSPINDKEDIIGALSLVIYTLILIPLVKYVHFVLWANDDGEGGTFALYSLICRHANVSLIPNQLPSDARISGFGLKVPSPELERSLIIKERLEASMALKKLLLILVLAGTAMVIADAVVTPAMSVMSAIGGLKVGVGVIEQDQVVVISVSFLVILFSVQKYGTSKLGLVLGPALLLWFFCLAGIGIYNLVKYDSSVFKAFNPAYIYFFFKRNSVNAWYALGGCVLCATGSEAMFADLSYFSVHSIQLTFILLVLPCLLLGYLGQAAYLSENFSAAGDAFFSSVPSSLFWPVFLISNVAALIASRAMTTATFTCIKQSIALGCFPRLKIIHTSKKFIGQIYIPVLNWSLLVVCLIVVCSTSNIFAIGNAYGIAELGIMMTTTILVTLIMLLIWQTNIIVVSMFAIVSLIVELVFFSSVCSSVADGSWIILVFATIMFLIMFVWNYGSKLKYETEVQKKLPMDLLRELGSNLGTIRAPGIGLLYNELAKGVPAIFGHFLTTLPAIHSMVIFVCIKYVPVPSVPQTERFLFRRVCPRSYHLFRCVARYGYKDVRKESHQAFEQILIESLEKFIRKEAQERALESDGDHNDTDSEDDTTLSRVLIAPNGSVYSLGVPLLAEHMNSSNKRPMERRKASIDFGAGPSSALDVEQSLEKELSFIHKAKESGVVYLLGHGDIRATKDSWFLKKLVINYLYAFLRKNSRRGITNLSVPHTHLMQVGMTYMV</sequence>
<organism>
    <name type="scientific">Arabidopsis thaliana</name>
    <name type="common">Mouse-ear cress</name>
    <dbReference type="NCBI Taxonomy" id="3702"/>
    <lineage>
        <taxon>Eukaryota</taxon>
        <taxon>Viridiplantae</taxon>
        <taxon>Streptophyta</taxon>
        <taxon>Embryophyta</taxon>
        <taxon>Tracheophyta</taxon>
        <taxon>Spermatophyta</taxon>
        <taxon>Magnoliopsida</taxon>
        <taxon>eudicotyledons</taxon>
        <taxon>Gunneridae</taxon>
        <taxon>Pentapetalae</taxon>
        <taxon>rosids</taxon>
        <taxon>malvids</taxon>
        <taxon>Brassicales</taxon>
        <taxon>Brassicaceae</taxon>
        <taxon>Camelineae</taxon>
        <taxon>Arabidopsis</taxon>
    </lineage>
</organism>
<dbReference type="EMBL" id="AL031394">
    <property type="protein sequence ID" value="CAA20566.1"/>
    <property type="status" value="ALT_SEQ"/>
    <property type="molecule type" value="Genomic_DNA"/>
</dbReference>
<dbReference type="EMBL" id="AL161583">
    <property type="protein sequence ID" value="CAB80070.1"/>
    <property type="status" value="ALT_SEQ"/>
    <property type="molecule type" value="Genomic_DNA"/>
</dbReference>
<dbReference type="EMBL" id="CP002687">
    <property type="protein sequence ID" value="AEE86242.1"/>
    <property type="molecule type" value="Genomic_DNA"/>
</dbReference>
<dbReference type="EMBL" id="AY099556">
    <property type="protein sequence ID" value="AAM20408.1"/>
    <property type="molecule type" value="mRNA"/>
</dbReference>
<dbReference type="EMBL" id="BT010357">
    <property type="protein sequence ID" value="AAQ56800.1"/>
    <property type="molecule type" value="mRNA"/>
</dbReference>
<dbReference type="EMBL" id="AF012660">
    <property type="protein sequence ID" value="AAC49848.1"/>
    <property type="molecule type" value="mRNA"/>
</dbReference>
<dbReference type="PIR" id="E85394">
    <property type="entry name" value="E85394"/>
</dbReference>
<dbReference type="PIR" id="T04970">
    <property type="entry name" value="T04970"/>
</dbReference>
<dbReference type="RefSeq" id="NP_195079.2">
    <property type="nucleotide sequence ID" value="NM_119508.4"/>
</dbReference>
<dbReference type="FunCoup" id="Q8LPL8">
    <property type="interactions" value="432"/>
</dbReference>
<dbReference type="STRING" id="3702.Q8LPL8"/>
<dbReference type="GlyCosmos" id="Q8LPL8">
    <property type="glycosylation" value="1 site, No reported glycans"/>
</dbReference>
<dbReference type="GlyGen" id="Q8LPL8">
    <property type="glycosylation" value="1 site"/>
</dbReference>
<dbReference type="iPTMnet" id="Q8LPL8"/>
<dbReference type="PaxDb" id="3702-AT4G33530.1"/>
<dbReference type="ProteomicsDB" id="250520"/>
<dbReference type="EnsemblPlants" id="AT4G33530.1">
    <property type="protein sequence ID" value="AT4G33530.1"/>
    <property type="gene ID" value="AT4G33530"/>
</dbReference>
<dbReference type="GeneID" id="829492"/>
<dbReference type="Gramene" id="AT4G33530.1">
    <property type="protein sequence ID" value="AT4G33530.1"/>
    <property type="gene ID" value="AT4G33530"/>
</dbReference>
<dbReference type="KEGG" id="ath:AT4G33530"/>
<dbReference type="Araport" id="AT4G33530"/>
<dbReference type="TAIR" id="AT4G33530">
    <property type="gene designation" value="KUP5"/>
</dbReference>
<dbReference type="eggNOG" id="ENOG502QPSA">
    <property type="taxonomic scope" value="Eukaryota"/>
</dbReference>
<dbReference type="HOGENOM" id="CLU_008142_2_0_1"/>
<dbReference type="InParanoid" id="Q8LPL8"/>
<dbReference type="OrthoDB" id="504708at2759"/>
<dbReference type="PhylomeDB" id="Q8LPL8"/>
<dbReference type="PRO" id="PR:Q8LPL8"/>
<dbReference type="Proteomes" id="UP000006548">
    <property type="component" value="Chromosome 4"/>
</dbReference>
<dbReference type="ExpressionAtlas" id="Q8LPL8">
    <property type="expression patterns" value="baseline and differential"/>
</dbReference>
<dbReference type="GO" id="GO:0000325">
    <property type="term" value="C:plant-type vacuole"/>
    <property type="evidence" value="ECO:0007005"/>
    <property type="project" value="TAIR"/>
</dbReference>
<dbReference type="GO" id="GO:0005886">
    <property type="term" value="C:plasma membrane"/>
    <property type="evidence" value="ECO:0007669"/>
    <property type="project" value="UniProtKB-SubCell"/>
</dbReference>
<dbReference type="GO" id="GO:0015079">
    <property type="term" value="F:potassium ion transmembrane transporter activity"/>
    <property type="evidence" value="ECO:0007669"/>
    <property type="project" value="InterPro"/>
</dbReference>
<dbReference type="InterPro" id="IPR003855">
    <property type="entry name" value="K+_transporter"/>
</dbReference>
<dbReference type="InterPro" id="IPR053952">
    <property type="entry name" value="K_trans_C"/>
</dbReference>
<dbReference type="InterPro" id="IPR053951">
    <property type="entry name" value="K_trans_N"/>
</dbReference>
<dbReference type="NCBIfam" id="TIGR00794">
    <property type="entry name" value="kup"/>
    <property type="match status" value="1"/>
</dbReference>
<dbReference type="PANTHER" id="PTHR30540">
    <property type="entry name" value="OSMOTIC STRESS POTASSIUM TRANSPORTER"/>
    <property type="match status" value="1"/>
</dbReference>
<dbReference type="PANTHER" id="PTHR30540:SF100">
    <property type="entry name" value="POTASSIUM TRANSPORTER 13"/>
    <property type="match status" value="1"/>
</dbReference>
<dbReference type="Pfam" id="PF02705">
    <property type="entry name" value="K_trans"/>
    <property type="match status" value="1"/>
</dbReference>
<dbReference type="Pfam" id="PF22776">
    <property type="entry name" value="K_trans_C"/>
    <property type="match status" value="1"/>
</dbReference>
<feature type="chain" id="PRO_0000209089" description="Potassium transporter 13">
    <location>
        <begin position="1"/>
        <end position="855"/>
    </location>
</feature>
<feature type="topological domain" description="Cytoplasmic" evidence="1">
    <location>
        <begin position="1"/>
        <end position="105"/>
    </location>
</feature>
<feature type="transmembrane region" description="Helical" evidence="1">
    <location>
        <begin position="106"/>
        <end position="126"/>
    </location>
</feature>
<feature type="topological domain" description="Extracellular" evidence="1">
    <location>
        <begin position="127"/>
        <end position="142"/>
    </location>
</feature>
<feature type="transmembrane region" description="Helical" evidence="1">
    <location>
        <begin position="143"/>
        <end position="163"/>
    </location>
</feature>
<feature type="topological domain" description="Cytoplasmic" evidence="1">
    <location>
        <begin position="164"/>
        <end position="233"/>
    </location>
</feature>
<feature type="transmembrane region" description="Helical" evidence="1">
    <location>
        <begin position="234"/>
        <end position="254"/>
    </location>
</feature>
<feature type="topological domain" description="Extracellular" evidence="1">
    <location>
        <begin position="255"/>
        <end position="268"/>
    </location>
</feature>
<feature type="transmembrane region" description="Helical" evidence="1">
    <location>
        <begin position="269"/>
        <end position="289"/>
    </location>
</feature>
<feature type="topological domain" description="Cytoplasmic" evidence="1">
    <location>
        <begin position="290"/>
        <end position="298"/>
    </location>
</feature>
<feature type="transmembrane region" description="Helical" evidence="1">
    <location>
        <begin position="299"/>
        <end position="319"/>
    </location>
</feature>
<feature type="topological domain" description="Extracellular" evidence="1">
    <location>
        <begin position="320"/>
        <end position="346"/>
    </location>
</feature>
<feature type="transmembrane region" description="Helical" evidence="1">
    <location>
        <begin position="347"/>
        <end position="367"/>
    </location>
</feature>
<feature type="topological domain" description="Cytoplasmic" evidence="1">
    <location>
        <begin position="368"/>
        <end position="379"/>
    </location>
</feature>
<feature type="transmembrane region" description="Helical" evidence="1">
    <location>
        <begin position="380"/>
        <end position="400"/>
    </location>
</feature>
<feature type="topological domain" description="Extracellular" evidence="1">
    <location>
        <begin position="401"/>
        <end position="415"/>
    </location>
</feature>
<feature type="transmembrane region" description="Helical" evidence="1">
    <location>
        <begin position="416"/>
        <end position="436"/>
    </location>
</feature>
<feature type="topological domain" description="Cytoplasmic" evidence="1">
    <location>
        <begin position="437"/>
        <end position="467"/>
    </location>
</feature>
<feature type="transmembrane region" description="Helical" evidence="1">
    <location>
        <begin position="468"/>
        <end position="488"/>
    </location>
</feature>
<feature type="topological domain" description="Extracellular" evidence="1">
    <location>
        <begin position="489"/>
        <end position="503"/>
    </location>
</feature>
<feature type="transmembrane region" description="Helical" evidence="1">
    <location>
        <begin position="504"/>
        <end position="524"/>
    </location>
</feature>
<feature type="topological domain" description="Cytoplasmic" evidence="1">
    <location>
        <begin position="525"/>
        <end position="528"/>
    </location>
</feature>
<feature type="transmembrane region" description="Helical" evidence="1">
    <location>
        <begin position="529"/>
        <end position="549"/>
    </location>
</feature>
<feature type="topological domain" description="Extracellular" evidence="1">
    <location>
        <begin position="550"/>
        <end position="553"/>
    </location>
</feature>
<feature type="transmembrane region" description="Helical" evidence="1">
    <location>
        <begin position="554"/>
        <end position="574"/>
    </location>
</feature>
<feature type="topological domain" description="Cytoplasmic" evidence="1">
    <location>
        <begin position="575"/>
        <end position="855"/>
    </location>
</feature>
<feature type="region of interest" description="Disordered" evidence="2">
    <location>
        <begin position="1"/>
        <end position="67"/>
    </location>
</feature>
<feature type="compositionally biased region" description="Acidic residues" evidence="2">
    <location>
        <begin position="36"/>
        <end position="51"/>
    </location>
</feature>
<feature type="modified residue" description="Phosphoserine" evidence="4">
    <location>
        <position position="766"/>
    </location>
</feature>
<feature type="glycosylation site" description="N-linked (GlcNAc...) asparagine" evidence="1">
    <location>
        <position position="404"/>
    </location>
</feature>
<feature type="sequence conflict" description="In Ref. 4; AAC49848." evidence="3" ref="4">
    <original>P</original>
    <variation>T</variation>
    <location>
        <position position="609"/>
    </location>
</feature>
<comment type="function">
    <text>Probable potassium transporter.</text>
</comment>
<comment type="subcellular location">
    <subcellularLocation>
        <location evidence="3">Cell membrane</location>
        <topology evidence="3">Multi-pass membrane protein</topology>
    </subcellularLocation>
</comment>
<comment type="similarity">
    <text evidence="3">Belongs to the HAK/KUP transporter (TC 2.A.72.3) family.</text>
</comment>
<comment type="sequence caution" evidence="3">
    <conflict type="erroneous gene model prediction">
        <sequence resource="EMBL-CDS" id="CAA20566"/>
    </conflict>
</comment>
<comment type="sequence caution" evidence="3">
    <conflict type="erroneous gene model prediction">
        <sequence resource="EMBL-CDS" id="CAB80070"/>
    </conflict>
</comment>
<evidence type="ECO:0000255" key="1"/>
<evidence type="ECO:0000256" key="2">
    <source>
        <dbReference type="SAM" id="MobiDB-lite"/>
    </source>
</evidence>
<evidence type="ECO:0000305" key="3"/>
<evidence type="ECO:0007744" key="4">
    <source>
    </source>
</evidence>
<proteinExistence type="evidence at protein level"/>